<feature type="chain" id="PRO_0000233900" description="Heat shock protein 90">
    <location>
        <begin position="1"/>
        <end position="706"/>
    </location>
</feature>
<feature type="region of interest" description="Disordered" evidence="5">
    <location>
        <begin position="217"/>
        <end position="249"/>
    </location>
</feature>
<feature type="region of interest" description="Disordered" evidence="5">
    <location>
        <begin position="679"/>
        <end position="706"/>
    </location>
</feature>
<feature type="short sequence motif" description="TPR repeat-binding">
    <location>
        <begin position="702"/>
        <end position="706"/>
    </location>
</feature>
<feature type="compositionally biased region" description="Basic and acidic residues" evidence="5">
    <location>
        <begin position="224"/>
        <end position="235"/>
    </location>
</feature>
<feature type="compositionally biased region" description="Acidic residues" evidence="5">
    <location>
        <begin position="236"/>
        <end position="245"/>
    </location>
</feature>
<feature type="compositionally biased region" description="Basic and acidic residues" evidence="5">
    <location>
        <begin position="690"/>
        <end position="706"/>
    </location>
</feature>
<feature type="binding site" evidence="1">
    <location>
        <position position="39"/>
    </location>
    <ligand>
        <name>ATP</name>
        <dbReference type="ChEBI" id="CHEBI:30616"/>
    </ligand>
</feature>
<feature type="binding site" evidence="1">
    <location>
        <position position="81"/>
    </location>
    <ligand>
        <name>ATP</name>
        <dbReference type="ChEBI" id="CHEBI:30616"/>
    </ligand>
</feature>
<feature type="binding site" evidence="1">
    <location>
        <position position="100"/>
    </location>
    <ligand>
        <name>ATP</name>
        <dbReference type="ChEBI" id="CHEBI:30616"/>
    </ligand>
</feature>
<feature type="binding site" evidence="1">
    <location>
        <position position="126"/>
    </location>
    <ligand>
        <name>ATP</name>
        <dbReference type="ChEBI" id="CHEBI:30616"/>
    </ligand>
</feature>
<feature type="binding site" evidence="1">
    <location>
        <position position="375"/>
    </location>
    <ligand>
        <name>ATP</name>
        <dbReference type="ChEBI" id="CHEBI:30616"/>
    </ligand>
</feature>
<accession>Q61W58</accession>
<accession>A8WXX6</accession>
<name>HSP90_CAEBR</name>
<proteinExistence type="inferred from homology"/>
<protein>
    <recommendedName>
        <fullName>Heat shock protein 90</fullName>
    </recommendedName>
    <alternativeName>
        <fullName>Abnormal dauer formation protein 21</fullName>
    </alternativeName>
</protein>
<comment type="function">
    <text evidence="3">Molecular chaperone that promotes the maturation, structural maintenance and proper regulation of specific target proteins involved for instance in cell cycle control and signal transduction. Undergoes a functional cycle that is linked to its ATPase activity. This cycle probably induces conformational changes in the client proteins, thereby causing their activation. Interacts dynamically with various co-chaperones that modulate its substrate recognition, ATPase cycle and chaperone function. By stabilizing the receptor-type guanylate cyclase daf-11 or another signal transduction component that regulates cGMP levels, plays a role in dauer formation and chemotaxis to non-volatile and volatile attractants detected by AWC sensory neurons. Participates in the control of cell cycle progression at the prophase/metaphase transition in oocyte development by ensuring the activity of wee-1.3 kinase, which negatively regulates cdk-1 through its phosphorylation. Regulates yap-1 nuclear export after heat shock treatment.</text>
</comment>
<comment type="subunit">
    <text evidence="2">Homodimer. Interacts (via TPR repeat-binding and central region) with pph-5 (via phosphatase domain); the interaction promotes pph-5 phosphatase activity. Interacts (via central region) with co-chaperone cdc-37 (via N-terminus); the interaction inhibits daf-21 ATPase activity.</text>
</comment>
<comment type="subcellular location">
    <subcellularLocation>
        <location>Cytoplasm</location>
        <location>Perinuclear region</location>
    </subcellularLocation>
    <text evidence="1">Perinuclear region of somatic cells.</text>
</comment>
<comment type="domain">
    <text evidence="1">The TPR repeat-binding motif mediates interaction with TPR repeat-containing proteins.</text>
</comment>
<comment type="similarity">
    <text evidence="4">Belongs to the heat shock protein 90 family.</text>
</comment>
<keyword id="KW-0067">ATP-binding</keyword>
<keyword id="KW-0131">Cell cycle</keyword>
<keyword id="KW-0143">Chaperone</keyword>
<keyword id="KW-0963">Cytoplasm</keyword>
<keyword id="KW-0547">Nucleotide-binding</keyword>
<keyword id="KW-1185">Reference proteome</keyword>
<keyword id="KW-0346">Stress response</keyword>
<reference key="1">
    <citation type="journal article" date="2003" name="PLoS Biol.">
        <title>The genome sequence of Caenorhabditis briggsae: a platform for comparative genomics.</title>
        <authorList>
            <person name="Stein L.D."/>
            <person name="Bao Z."/>
            <person name="Blasiar D."/>
            <person name="Blumenthal T."/>
            <person name="Brent M.R."/>
            <person name="Chen N."/>
            <person name="Chinwalla A."/>
            <person name="Clarke L."/>
            <person name="Clee C."/>
            <person name="Coghlan A."/>
            <person name="Coulson A."/>
            <person name="D'Eustachio P."/>
            <person name="Fitch D.H.A."/>
            <person name="Fulton L.A."/>
            <person name="Fulton R.E."/>
            <person name="Griffiths-Jones S."/>
            <person name="Harris T.W."/>
            <person name="Hillier L.W."/>
            <person name="Kamath R."/>
            <person name="Kuwabara P.E."/>
            <person name="Mardis E.R."/>
            <person name="Marra M.A."/>
            <person name="Miner T.L."/>
            <person name="Minx P."/>
            <person name="Mullikin J.C."/>
            <person name="Plumb R.W."/>
            <person name="Rogers J."/>
            <person name="Schein J.E."/>
            <person name="Sohrmann M."/>
            <person name="Spieth J."/>
            <person name="Stajich J.E."/>
            <person name="Wei C."/>
            <person name="Willey D."/>
            <person name="Wilson R.K."/>
            <person name="Durbin R.M."/>
            <person name="Waterston R.H."/>
        </authorList>
    </citation>
    <scope>NUCLEOTIDE SEQUENCE [LARGE SCALE GENOMIC DNA]</scope>
    <source>
        <strain>AF16</strain>
    </source>
</reference>
<sequence>MSENAETFAFQAEIAQLMSLIINTFYSNKEIYLRELISNASDALDKIRYQALTEPSELDTGKELFIKITPNKEEKTLTIMDTGIGMTKADLVNNLGTIAKSGTKAFMEALQAGADISMIGQFGVGFYSAFLVADKVVVTSKNNDDDSYQWESSAGGSFVVRPYNDPELTRGTKITMYIKEDQVDFLEERKIKEIVKKHSQFIGYPIKLVVEKEREKEVEDEEAVESKDEEKKEGDVENVGEDADAEKDKKKTKKIKEKYFEDEELNKTKPIWTRNPDDISNEEYAEFYKSLSNDWEDHLAVKHFSVEGQLEFRALLFAPQRAPFDLFENKKSKNSIKLYVRRVFIMENCEELMPEYLNFIKGVVDSEDLPLNISREMLQQSKILKVIRKNLVKKCMELFDEIAEDKDNFKKFYEQFGKNLKLGIHEDSTNRKKLSEFLRYATSAGEEPTSLKEYVSRMKENQTQIYYITGESKEVVAASAFVERVKSRGFEVLYMCDPIDEYCVQQLKEYDGKKLVSVTKEGLELPETEEEKKKFEEDKVAYENLCKVIKDILEKKIEKVAVSNRLVSSPCCIVTSEYGWSANMERIMKAQALRDSSTMGYMAAKKHLEINPDHAIMKTLRERVEADKNDKTVKDLVVLLFETALLSSGFSLEEPQSHASRIYRMIKLGLDIGDEDIEESAVPSSCTAEAKIEGADEDASRMEEVD</sequence>
<gene>
    <name evidence="3" type="primary">hsp-90</name>
    <name type="ORF">CBG04560</name>
</gene>
<dbReference type="EMBL" id="HE601135">
    <property type="protein sequence ID" value="CAP25236.1"/>
    <property type="molecule type" value="Genomic_DNA"/>
</dbReference>
<dbReference type="SMR" id="Q61W58"/>
<dbReference type="FunCoup" id="Q61W58">
    <property type="interactions" value="1976"/>
</dbReference>
<dbReference type="STRING" id="6238.Q61W58"/>
<dbReference type="EnsemblMetazoa" id="CBG04560.1">
    <property type="protein sequence ID" value="CBG04560.1"/>
    <property type="gene ID" value="WBGene00027205"/>
</dbReference>
<dbReference type="KEGG" id="cbr:CBG_04560"/>
<dbReference type="CTD" id="8579774"/>
<dbReference type="WormBase" id="CBG04560">
    <property type="protein sequence ID" value="CBP01204"/>
    <property type="gene ID" value="WBGene00027205"/>
    <property type="gene designation" value="Cbr-hsp-90"/>
</dbReference>
<dbReference type="eggNOG" id="KOG0019">
    <property type="taxonomic scope" value="Eukaryota"/>
</dbReference>
<dbReference type="HOGENOM" id="CLU_006684_1_3_1"/>
<dbReference type="InParanoid" id="Q61W58"/>
<dbReference type="OMA" id="MRRMKEM"/>
<dbReference type="Proteomes" id="UP000008549">
    <property type="component" value="Unassembled WGS sequence"/>
</dbReference>
<dbReference type="GO" id="GO:0005829">
    <property type="term" value="C:cytosol"/>
    <property type="evidence" value="ECO:0000318"/>
    <property type="project" value="GO_Central"/>
</dbReference>
<dbReference type="GO" id="GO:1990565">
    <property type="term" value="C:HSP90-CDC37 chaperone complex"/>
    <property type="evidence" value="ECO:0007669"/>
    <property type="project" value="EnsemblMetazoa"/>
</dbReference>
<dbReference type="GO" id="GO:0048471">
    <property type="term" value="C:perinuclear region of cytoplasm"/>
    <property type="evidence" value="ECO:0000318"/>
    <property type="project" value="GO_Central"/>
</dbReference>
<dbReference type="GO" id="GO:0005886">
    <property type="term" value="C:plasma membrane"/>
    <property type="evidence" value="ECO:0000318"/>
    <property type="project" value="GO_Central"/>
</dbReference>
<dbReference type="GO" id="GO:0032991">
    <property type="term" value="C:protein-containing complex"/>
    <property type="evidence" value="ECO:0000318"/>
    <property type="project" value="GO_Central"/>
</dbReference>
<dbReference type="GO" id="GO:0005524">
    <property type="term" value="F:ATP binding"/>
    <property type="evidence" value="ECO:0000318"/>
    <property type="project" value="GO_Central"/>
</dbReference>
<dbReference type="GO" id="GO:0016887">
    <property type="term" value="F:ATP hydrolysis activity"/>
    <property type="evidence" value="ECO:0000318"/>
    <property type="project" value="GO_Central"/>
</dbReference>
<dbReference type="GO" id="GO:0140662">
    <property type="term" value="F:ATP-dependent protein folding chaperone"/>
    <property type="evidence" value="ECO:0007669"/>
    <property type="project" value="InterPro"/>
</dbReference>
<dbReference type="GO" id="GO:0042802">
    <property type="term" value="F:identical protein binding"/>
    <property type="evidence" value="ECO:0007669"/>
    <property type="project" value="EnsemblMetazoa"/>
</dbReference>
<dbReference type="GO" id="GO:0035259">
    <property type="term" value="F:nuclear glucocorticoid receptor binding"/>
    <property type="evidence" value="ECO:0007669"/>
    <property type="project" value="EnsemblMetazoa"/>
</dbReference>
<dbReference type="GO" id="GO:1990634">
    <property type="term" value="F:protein phosphatase 5 binding"/>
    <property type="evidence" value="ECO:0007669"/>
    <property type="project" value="EnsemblMetazoa"/>
</dbReference>
<dbReference type="GO" id="GO:0072542">
    <property type="term" value="F:protein phosphatase activator activity"/>
    <property type="evidence" value="ECO:0007669"/>
    <property type="project" value="EnsemblMetazoa"/>
</dbReference>
<dbReference type="GO" id="GO:0051082">
    <property type="term" value="F:unfolded protein binding"/>
    <property type="evidence" value="ECO:0000318"/>
    <property type="project" value="GO_Central"/>
</dbReference>
<dbReference type="GO" id="GO:0034605">
    <property type="term" value="P:cellular response to heat"/>
    <property type="evidence" value="ECO:0000318"/>
    <property type="project" value="GO_Central"/>
</dbReference>
<dbReference type="GO" id="GO:0061077">
    <property type="term" value="P:chaperone-mediated protein folding"/>
    <property type="evidence" value="ECO:0007669"/>
    <property type="project" value="EnsemblMetazoa"/>
</dbReference>
<dbReference type="GO" id="GO:0006935">
    <property type="term" value="P:chemotaxis"/>
    <property type="evidence" value="ECO:0007669"/>
    <property type="project" value="EnsemblMetazoa"/>
</dbReference>
<dbReference type="GO" id="GO:0040024">
    <property type="term" value="P:dauer larval development"/>
    <property type="evidence" value="ECO:0007669"/>
    <property type="project" value="EnsemblMetazoa"/>
</dbReference>
<dbReference type="GO" id="GO:0050829">
    <property type="term" value="P:defense response to Gram-negative bacterium"/>
    <property type="evidence" value="ECO:0007669"/>
    <property type="project" value="EnsemblMetazoa"/>
</dbReference>
<dbReference type="GO" id="GO:0008340">
    <property type="term" value="P:determination of adult lifespan"/>
    <property type="evidence" value="ECO:0007669"/>
    <property type="project" value="EnsemblMetazoa"/>
</dbReference>
<dbReference type="GO" id="GO:0006611">
    <property type="term" value="P:protein export from nucleus"/>
    <property type="evidence" value="ECO:0007669"/>
    <property type="project" value="EnsemblMetazoa"/>
</dbReference>
<dbReference type="GO" id="GO:0006457">
    <property type="term" value="P:protein folding"/>
    <property type="evidence" value="ECO:0000318"/>
    <property type="project" value="GO_Central"/>
</dbReference>
<dbReference type="GO" id="GO:0050821">
    <property type="term" value="P:protein stabilization"/>
    <property type="evidence" value="ECO:0000318"/>
    <property type="project" value="GO_Central"/>
</dbReference>
<dbReference type="GO" id="GO:0050920">
    <property type="term" value="P:regulation of chemotaxis"/>
    <property type="evidence" value="ECO:0007669"/>
    <property type="project" value="EnsemblMetazoa"/>
</dbReference>
<dbReference type="CDD" id="cd16927">
    <property type="entry name" value="HATPase_Hsp90-like"/>
    <property type="match status" value="1"/>
</dbReference>
<dbReference type="FunFam" id="1.20.120.790:FF:000001">
    <property type="entry name" value="Heat shock protein 90 alpha"/>
    <property type="match status" value="1"/>
</dbReference>
<dbReference type="FunFam" id="3.30.230.80:FF:000001">
    <property type="entry name" value="Heat shock protein 90 alpha"/>
    <property type="match status" value="1"/>
</dbReference>
<dbReference type="FunFam" id="3.40.50.11260:FF:000001">
    <property type="entry name" value="Heat shock protein 90 alpha"/>
    <property type="match status" value="1"/>
</dbReference>
<dbReference type="FunFam" id="3.30.565.10:FF:000001">
    <property type="entry name" value="Heat shock protein HSP 90-alpha"/>
    <property type="match status" value="1"/>
</dbReference>
<dbReference type="Gene3D" id="3.30.230.80">
    <property type="match status" value="1"/>
</dbReference>
<dbReference type="Gene3D" id="3.40.50.11260">
    <property type="match status" value="1"/>
</dbReference>
<dbReference type="Gene3D" id="1.20.120.790">
    <property type="entry name" value="Heat shock protein 90, C-terminal domain"/>
    <property type="match status" value="1"/>
</dbReference>
<dbReference type="Gene3D" id="3.30.565.10">
    <property type="entry name" value="Histidine kinase-like ATPase, C-terminal domain"/>
    <property type="match status" value="1"/>
</dbReference>
<dbReference type="HAMAP" id="MF_00505">
    <property type="entry name" value="HSP90"/>
    <property type="match status" value="1"/>
</dbReference>
<dbReference type="InterPro" id="IPR036890">
    <property type="entry name" value="HATPase_C_sf"/>
</dbReference>
<dbReference type="InterPro" id="IPR037196">
    <property type="entry name" value="HSP90_C"/>
</dbReference>
<dbReference type="InterPro" id="IPR001404">
    <property type="entry name" value="Hsp90_fam"/>
</dbReference>
<dbReference type="InterPro" id="IPR020575">
    <property type="entry name" value="Hsp90_N"/>
</dbReference>
<dbReference type="InterPro" id="IPR020568">
    <property type="entry name" value="Ribosomal_Su5_D2-typ_SF"/>
</dbReference>
<dbReference type="NCBIfam" id="NF003555">
    <property type="entry name" value="PRK05218.1"/>
    <property type="match status" value="1"/>
</dbReference>
<dbReference type="PANTHER" id="PTHR11528">
    <property type="entry name" value="HEAT SHOCK PROTEIN 90 FAMILY MEMBER"/>
    <property type="match status" value="1"/>
</dbReference>
<dbReference type="Pfam" id="PF13589">
    <property type="entry name" value="HATPase_c_3"/>
    <property type="match status" value="1"/>
</dbReference>
<dbReference type="Pfam" id="PF00183">
    <property type="entry name" value="HSP90"/>
    <property type="match status" value="1"/>
</dbReference>
<dbReference type="PIRSF" id="PIRSF002583">
    <property type="entry name" value="Hsp90"/>
    <property type="match status" value="1"/>
</dbReference>
<dbReference type="PRINTS" id="PR00775">
    <property type="entry name" value="HEATSHOCK90"/>
</dbReference>
<dbReference type="SMART" id="SM00387">
    <property type="entry name" value="HATPase_c"/>
    <property type="match status" value="1"/>
</dbReference>
<dbReference type="SUPFAM" id="SSF55874">
    <property type="entry name" value="ATPase domain of HSP90 chaperone/DNA topoisomerase II/histidine kinase"/>
    <property type="match status" value="1"/>
</dbReference>
<dbReference type="SUPFAM" id="SSF110942">
    <property type="entry name" value="HSP90 C-terminal domain"/>
    <property type="match status" value="1"/>
</dbReference>
<dbReference type="SUPFAM" id="SSF54211">
    <property type="entry name" value="Ribosomal protein S5 domain 2-like"/>
    <property type="match status" value="1"/>
</dbReference>
<evidence type="ECO:0000250" key="1"/>
<evidence type="ECO:0000250" key="2">
    <source>
        <dbReference type="UniProtKB" id="P08238"/>
    </source>
</evidence>
<evidence type="ECO:0000250" key="3">
    <source>
        <dbReference type="UniProtKB" id="Q18688"/>
    </source>
</evidence>
<evidence type="ECO:0000255" key="4"/>
<evidence type="ECO:0000256" key="5">
    <source>
        <dbReference type="SAM" id="MobiDB-lite"/>
    </source>
</evidence>
<organism>
    <name type="scientific">Caenorhabditis briggsae</name>
    <dbReference type="NCBI Taxonomy" id="6238"/>
    <lineage>
        <taxon>Eukaryota</taxon>
        <taxon>Metazoa</taxon>
        <taxon>Ecdysozoa</taxon>
        <taxon>Nematoda</taxon>
        <taxon>Chromadorea</taxon>
        <taxon>Rhabditida</taxon>
        <taxon>Rhabditina</taxon>
        <taxon>Rhabditomorpha</taxon>
        <taxon>Rhabditoidea</taxon>
        <taxon>Rhabditidae</taxon>
        <taxon>Peloderinae</taxon>
        <taxon>Caenorhabditis</taxon>
    </lineage>
</organism>